<name>RLMKL_VIBC3</name>
<comment type="function">
    <text evidence="1">Specifically methylates the guanine in position 2445 (m2G2445) and the guanine in position 2069 (m7G2069) of 23S rRNA.</text>
</comment>
<comment type="catalytic activity">
    <reaction evidence="1">
        <text>guanosine(2445) in 23S rRNA + S-adenosyl-L-methionine = N(2)-methylguanosine(2445) in 23S rRNA + S-adenosyl-L-homocysteine + H(+)</text>
        <dbReference type="Rhea" id="RHEA:42740"/>
        <dbReference type="Rhea" id="RHEA-COMP:10215"/>
        <dbReference type="Rhea" id="RHEA-COMP:10216"/>
        <dbReference type="ChEBI" id="CHEBI:15378"/>
        <dbReference type="ChEBI" id="CHEBI:57856"/>
        <dbReference type="ChEBI" id="CHEBI:59789"/>
        <dbReference type="ChEBI" id="CHEBI:74269"/>
        <dbReference type="ChEBI" id="CHEBI:74481"/>
        <dbReference type="EC" id="2.1.1.173"/>
    </reaction>
</comment>
<comment type="catalytic activity">
    <reaction evidence="1">
        <text>guanosine(2069) in 23S rRNA + S-adenosyl-L-methionine = N(2)-methylguanosine(2069) in 23S rRNA + S-adenosyl-L-homocysteine + H(+)</text>
        <dbReference type="Rhea" id="RHEA:43772"/>
        <dbReference type="Rhea" id="RHEA-COMP:10688"/>
        <dbReference type="Rhea" id="RHEA-COMP:10689"/>
        <dbReference type="ChEBI" id="CHEBI:15378"/>
        <dbReference type="ChEBI" id="CHEBI:57856"/>
        <dbReference type="ChEBI" id="CHEBI:59789"/>
        <dbReference type="ChEBI" id="CHEBI:74269"/>
        <dbReference type="ChEBI" id="CHEBI:74481"/>
        <dbReference type="EC" id="2.1.1.264"/>
    </reaction>
</comment>
<comment type="subcellular location">
    <subcellularLocation>
        <location evidence="1">Cytoplasm</location>
    </subcellularLocation>
</comment>
<comment type="similarity">
    <text evidence="1">Belongs to the methyltransferase superfamily. RlmKL family.</text>
</comment>
<reference key="1">
    <citation type="submission" date="2007-03" db="EMBL/GenBank/DDBJ databases">
        <authorList>
            <person name="Heidelberg J."/>
        </authorList>
    </citation>
    <scope>NUCLEOTIDE SEQUENCE [LARGE SCALE GENOMIC DNA]</scope>
    <source>
        <strain>ATCC 39541 / Classical Ogawa 395 / O395</strain>
    </source>
</reference>
<reference key="2">
    <citation type="journal article" date="2008" name="PLoS ONE">
        <title>A recalibrated molecular clock and independent origins for the cholera pandemic clones.</title>
        <authorList>
            <person name="Feng L."/>
            <person name="Reeves P.R."/>
            <person name="Lan R."/>
            <person name="Ren Y."/>
            <person name="Gao C."/>
            <person name="Zhou Z."/>
            <person name="Ren Y."/>
            <person name="Cheng J."/>
            <person name="Wang W."/>
            <person name="Wang J."/>
            <person name="Qian W."/>
            <person name="Li D."/>
            <person name="Wang L."/>
        </authorList>
    </citation>
    <scope>NUCLEOTIDE SEQUENCE [LARGE SCALE GENOMIC DNA]</scope>
    <source>
        <strain>ATCC 39541 / Classical Ogawa 395 / O395</strain>
    </source>
</reference>
<organism>
    <name type="scientific">Vibrio cholerae serotype O1 (strain ATCC 39541 / Classical Ogawa 395 / O395)</name>
    <dbReference type="NCBI Taxonomy" id="345073"/>
    <lineage>
        <taxon>Bacteria</taxon>
        <taxon>Pseudomonadati</taxon>
        <taxon>Pseudomonadota</taxon>
        <taxon>Gammaproteobacteria</taxon>
        <taxon>Vibrionales</taxon>
        <taxon>Vibrionaceae</taxon>
        <taxon>Vibrio</taxon>
    </lineage>
</organism>
<sequence>MNQYLAVTSNGLENLLVEELTQLGINDAKPVQAGVKFKATNEQIYRCCLWSRLASRFVRIVAEFKCQNDLDLYLSTTSVNWVNYFHSSKKLVVDFNGTNREIRNSQYGAMKVKDAIVDCFTKKNLPRPSISKDLADLHIHVRLHKENALLGIDMVGSGLHARGYRTEAGKAPLRETLAAAIILRSGWDASKPLLDPMCGSGTLLIEAAMMAANIAPGLQRKKWGFEALEDFEPELWASVKSEASVQGKRGVKKVETHFYGVDNDNRVLQTAKDNARRAGVEELISFTLGDAAKVKRPENFAEGIVICNPPYGERLGTHPGLIALYTAFGAQLKAEFGGCHASIFSSSDELLSCLRMRADKQFKLNNGALPCHQKNYTIAMREQNSVSNEGTQEILIAPDFANRLKKNFNKIGKWAKREGLDCFRLYDADLPEYNVAIDVYQDHLMIQEYAAPKDIPEEKAKRRLTDIIRAAIQVLDVDANNVVLKVRERQKGTSQYEKLGQQAQTMQITEYGVKLIVNLYDYLDTGLFLDHKITRRRLGQMAQGKDFLNLFAYTGSATVHAACGGAKSTTTVDMSKTYLEWAKENMQLNGQVGRQHQYVQADCLQWLANAQSQYDLIFIDPPTFSNSKRMEQTFDVQRDHVTLMTNLKRLLRPEGTIVFSNNKRHFKMDMEALHALGLNAQNISHQTLPLDFERNKQIHNCWLITHQS</sequence>
<feature type="chain" id="PRO_0000366847" description="Ribosomal RNA large subunit methyltransferase K/L">
    <location>
        <begin position="1"/>
        <end position="708"/>
    </location>
</feature>
<feature type="domain" description="THUMP" evidence="1">
    <location>
        <begin position="43"/>
        <end position="154"/>
    </location>
</feature>
<keyword id="KW-0963">Cytoplasm</keyword>
<keyword id="KW-0489">Methyltransferase</keyword>
<keyword id="KW-0694">RNA-binding</keyword>
<keyword id="KW-0698">rRNA processing</keyword>
<keyword id="KW-0949">S-adenosyl-L-methionine</keyword>
<keyword id="KW-0808">Transferase</keyword>
<protein>
    <recommendedName>
        <fullName evidence="1">Ribosomal RNA large subunit methyltransferase K/L</fullName>
    </recommendedName>
    <domain>
        <recommendedName>
            <fullName evidence="1">23S rRNA m2G2445 methyltransferase</fullName>
            <ecNumber evidence="1">2.1.1.173</ecNumber>
        </recommendedName>
        <alternativeName>
            <fullName evidence="1">rRNA (guanine-N(2)-)-methyltransferase RlmL</fullName>
        </alternativeName>
    </domain>
    <domain>
        <recommendedName>
            <fullName evidence="1">23S rRNA m7G2069 methyltransferase</fullName>
            <ecNumber evidence="1">2.1.1.264</ecNumber>
        </recommendedName>
        <alternativeName>
            <fullName evidence="1">rRNA (guanine-N(7)-)-methyltransferase RlmK</fullName>
        </alternativeName>
    </domain>
</protein>
<dbReference type="EC" id="2.1.1.173" evidence="1"/>
<dbReference type="EC" id="2.1.1.264" evidence="1"/>
<dbReference type="EMBL" id="CP000627">
    <property type="protein sequence ID" value="ABQ19772.1"/>
    <property type="molecule type" value="Genomic_DNA"/>
</dbReference>
<dbReference type="EMBL" id="CP001235">
    <property type="protein sequence ID" value="ACP09614.1"/>
    <property type="molecule type" value="Genomic_DNA"/>
</dbReference>
<dbReference type="SMR" id="A5F836"/>
<dbReference type="KEGG" id="vco:VC0395_A1095"/>
<dbReference type="KEGG" id="vcr:VC395_1608"/>
<dbReference type="PATRIC" id="fig|345073.21.peg.1554"/>
<dbReference type="eggNOG" id="COG0116">
    <property type="taxonomic scope" value="Bacteria"/>
</dbReference>
<dbReference type="eggNOG" id="COG1092">
    <property type="taxonomic scope" value="Bacteria"/>
</dbReference>
<dbReference type="HOGENOM" id="CLU_014042_2_0_6"/>
<dbReference type="OrthoDB" id="9809404at2"/>
<dbReference type="Proteomes" id="UP000000249">
    <property type="component" value="Chromosome 2"/>
</dbReference>
<dbReference type="GO" id="GO:0005737">
    <property type="term" value="C:cytoplasm"/>
    <property type="evidence" value="ECO:0007669"/>
    <property type="project" value="UniProtKB-SubCell"/>
</dbReference>
<dbReference type="GO" id="GO:0052915">
    <property type="term" value="F:23S rRNA (guanine(2445)-N(2))-methyltransferase activity"/>
    <property type="evidence" value="ECO:0007669"/>
    <property type="project" value="UniProtKB-UniRule"/>
</dbReference>
<dbReference type="GO" id="GO:0003723">
    <property type="term" value="F:RNA binding"/>
    <property type="evidence" value="ECO:0007669"/>
    <property type="project" value="UniProtKB-KW"/>
</dbReference>
<dbReference type="GO" id="GO:0070043">
    <property type="term" value="F:rRNA (guanine-N7-)-methyltransferase activity"/>
    <property type="evidence" value="ECO:0007669"/>
    <property type="project" value="UniProtKB-UniRule"/>
</dbReference>
<dbReference type="CDD" id="cd02440">
    <property type="entry name" value="AdoMet_MTases"/>
    <property type="match status" value="1"/>
</dbReference>
<dbReference type="CDD" id="cd11715">
    <property type="entry name" value="THUMP_AdoMetMT"/>
    <property type="match status" value="1"/>
</dbReference>
<dbReference type="FunFam" id="3.30.750.80:FF:000001">
    <property type="entry name" value="Ribosomal RNA large subunit methyltransferase K/L"/>
    <property type="match status" value="1"/>
</dbReference>
<dbReference type="FunFam" id="3.40.50.150:FF:000039">
    <property type="entry name" value="Ribosomal RNA large subunit methyltransferase K/L"/>
    <property type="match status" value="1"/>
</dbReference>
<dbReference type="Gene3D" id="3.30.2130.30">
    <property type="match status" value="1"/>
</dbReference>
<dbReference type="Gene3D" id="3.30.750.80">
    <property type="entry name" value="RNA methyltransferase domain (HRMD) like"/>
    <property type="match status" value="1"/>
</dbReference>
<dbReference type="Gene3D" id="3.40.50.150">
    <property type="entry name" value="Vaccinia Virus protein VP39"/>
    <property type="match status" value="2"/>
</dbReference>
<dbReference type="HAMAP" id="MF_01858">
    <property type="entry name" value="23SrRNA_methyltr_KL"/>
    <property type="match status" value="1"/>
</dbReference>
<dbReference type="InterPro" id="IPR017244">
    <property type="entry name" value="23SrRNA_methyltr_KL"/>
</dbReference>
<dbReference type="InterPro" id="IPR002052">
    <property type="entry name" value="DNA_methylase_N6_adenine_CS"/>
</dbReference>
<dbReference type="InterPro" id="IPR000241">
    <property type="entry name" value="RlmKL-like_Mtase"/>
</dbReference>
<dbReference type="InterPro" id="IPR053943">
    <property type="entry name" value="RlmKL-like_Mtase_CS"/>
</dbReference>
<dbReference type="InterPro" id="IPR054170">
    <property type="entry name" value="RlmL_1st"/>
</dbReference>
<dbReference type="InterPro" id="IPR019614">
    <property type="entry name" value="SAM-dep_methyl-trfase"/>
</dbReference>
<dbReference type="InterPro" id="IPR029063">
    <property type="entry name" value="SAM-dependent_MTases_sf"/>
</dbReference>
<dbReference type="InterPro" id="IPR004114">
    <property type="entry name" value="THUMP_dom"/>
</dbReference>
<dbReference type="NCBIfam" id="NF008748">
    <property type="entry name" value="PRK11783.1"/>
    <property type="match status" value="1"/>
</dbReference>
<dbReference type="PANTHER" id="PTHR47313">
    <property type="entry name" value="RIBOSOMAL RNA LARGE SUBUNIT METHYLTRANSFERASE K/L"/>
    <property type="match status" value="1"/>
</dbReference>
<dbReference type="PANTHER" id="PTHR47313:SF1">
    <property type="entry name" value="RIBOSOMAL RNA LARGE SUBUNIT METHYLTRANSFERASE K_L"/>
    <property type="match status" value="1"/>
</dbReference>
<dbReference type="Pfam" id="PF10672">
    <property type="entry name" value="Methyltrans_SAM"/>
    <property type="match status" value="1"/>
</dbReference>
<dbReference type="Pfam" id="PF22020">
    <property type="entry name" value="RlmL_1st"/>
    <property type="match status" value="1"/>
</dbReference>
<dbReference type="Pfam" id="PF02926">
    <property type="entry name" value="THUMP"/>
    <property type="match status" value="1"/>
</dbReference>
<dbReference type="Pfam" id="PF01170">
    <property type="entry name" value="UPF0020"/>
    <property type="match status" value="1"/>
</dbReference>
<dbReference type="PIRSF" id="PIRSF037618">
    <property type="entry name" value="RNA_Mtase_bacteria_prd"/>
    <property type="match status" value="1"/>
</dbReference>
<dbReference type="SMART" id="SM00981">
    <property type="entry name" value="THUMP"/>
    <property type="match status" value="1"/>
</dbReference>
<dbReference type="SUPFAM" id="SSF53335">
    <property type="entry name" value="S-adenosyl-L-methionine-dependent methyltransferases"/>
    <property type="match status" value="2"/>
</dbReference>
<dbReference type="PROSITE" id="PS51165">
    <property type="entry name" value="THUMP"/>
    <property type="match status" value="1"/>
</dbReference>
<dbReference type="PROSITE" id="PS01261">
    <property type="entry name" value="UPF0020"/>
    <property type="match status" value="1"/>
</dbReference>
<accession>A5F836</accession>
<accession>C3M0P8</accession>
<proteinExistence type="inferred from homology"/>
<evidence type="ECO:0000255" key="1">
    <source>
        <dbReference type="HAMAP-Rule" id="MF_01858"/>
    </source>
</evidence>
<gene>
    <name evidence="1" type="primary">rlmL</name>
    <name type="ordered locus">VC0395_A1095</name>
    <name type="ordered locus">VC395_1608</name>
</gene>